<protein>
    <recommendedName>
        <fullName evidence="1">Large ribosomal subunit protein uL14</fullName>
    </recommendedName>
    <alternativeName>
        <fullName evidence="2">50S ribosomal protein L14</fullName>
    </alternativeName>
</protein>
<dbReference type="EMBL" id="CP000738">
    <property type="protein sequence ID" value="ABR59849.1"/>
    <property type="molecule type" value="Genomic_DNA"/>
</dbReference>
<dbReference type="RefSeq" id="WP_003536525.1">
    <property type="nucleotide sequence ID" value="NC_009636.1"/>
</dbReference>
<dbReference type="RefSeq" id="YP_001326684.1">
    <property type="nucleotide sequence ID" value="NC_009636.1"/>
</dbReference>
<dbReference type="SMR" id="A6U869"/>
<dbReference type="STRING" id="366394.Smed_0996"/>
<dbReference type="GeneID" id="89575690"/>
<dbReference type="KEGG" id="smd:Smed_0996"/>
<dbReference type="PATRIC" id="fig|366394.8.peg.4117"/>
<dbReference type="eggNOG" id="COG0093">
    <property type="taxonomic scope" value="Bacteria"/>
</dbReference>
<dbReference type="HOGENOM" id="CLU_095071_2_1_5"/>
<dbReference type="OrthoDB" id="9806379at2"/>
<dbReference type="PRO" id="PR:A6U869"/>
<dbReference type="Proteomes" id="UP000001108">
    <property type="component" value="Chromosome"/>
</dbReference>
<dbReference type="GO" id="GO:0022625">
    <property type="term" value="C:cytosolic large ribosomal subunit"/>
    <property type="evidence" value="ECO:0007669"/>
    <property type="project" value="TreeGrafter"/>
</dbReference>
<dbReference type="GO" id="GO:0070180">
    <property type="term" value="F:large ribosomal subunit rRNA binding"/>
    <property type="evidence" value="ECO:0007669"/>
    <property type="project" value="TreeGrafter"/>
</dbReference>
<dbReference type="GO" id="GO:0003735">
    <property type="term" value="F:structural constituent of ribosome"/>
    <property type="evidence" value="ECO:0007669"/>
    <property type="project" value="InterPro"/>
</dbReference>
<dbReference type="GO" id="GO:0006412">
    <property type="term" value="P:translation"/>
    <property type="evidence" value="ECO:0007669"/>
    <property type="project" value="UniProtKB-UniRule"/>
</dbReference>
<dbReference type="CDD" id="cd00337">
    <property type="entry name" value="Ribosomal_uL14"/>
    <property type="match status" value="1"/>
</dbReference>
<dbReference type="FunFam" id="2.40.150.20:FF:000001">
    <property type="entry name" value="50S ribosomal protein L14"/>
    <property type="match status" value="1"/>
</dbReference>
<dbReference type="Gene3D" id="2.40.150.20">
    <property type="entry name" value="Ribosomal protein L14"/>
    <property type="match status" value="1"/>
</dbReference>
<dbReference type="HAMAP" id="MF_01367">
    <property type="entry name" value="Ribosomal_uL14"/>
    <property type="match status" value="1"/>
</dbReference>
<dbReference type="InterPro" id="IPR000218">
    <property type="entry name" value="Ribosomal_uL14"/>
</dbReference>
<dbReference type="InterPro" id="IPR005745">
    <property type="entry name" value="Ribosomal_uL14_bac-type"/>
</dbReference>
<dbReference type="InterPro" id="IPR019972">
    <property type="entry name" value="Ribosomal_uL14_CS"/>
</dbReference>
<dbReference type="InterPro" id="IPR036853">
    <property type="entry name" value="Ribosomal_uL14_sf"/>
</dbReference>
<dbReference type="NCBIfam" id="TIGR01067">
    <property type="entry name" value="rplN_bact"/>
    <property type="match status" value="1"/>
</dbReference>
<dbReference type="PANTHER" id="PTHR11761">
    <property type="entry name" value="50S/60S RIBOSOMAL PROTEIN L14/L23"/>
    <property type="match status" value="1"/>
</dbReference>
<dbReference type="PANTHER" id="PTHR11761:SF3">
    <property type="entry name" value="LARGE RIBOSOMAL SUBUNIT PROTEIN UL14M"/>
    <property type="match status" value="1"/>
</dbReference>
<dbReference type="Pfam" id="PF00238">
    <property type="entry name" value="Ribosomal_L14"/>
    <property type="match status" value="1"/>
</dbReference>
<dbReference type="SMART" id="SM01374">
    <property type="entry name" value="Ribosomal_L14"/>
    <property type="match status" value="1"/>
</dbReference>
<dbReference type="SUPFAM" id="SSF50193">
    <property type="entry name" value="Ribosomal protein L14"/>
    <property type="match status" value="1"/>
</dbReference>
<dbReference type="PROSITE" id="PS00049">
    <property type="entry name" value="RIBOSOMAL_L14"/>
    <property type="match status" value="1"/>
</dbReference>
<sequence>MIQMQTNLDVADNSGARRVMCIKVLGGSKRKYASIGDIIVVSIKEAIPRGRVKKGDVMKAVVVRTAKDIRRADGSVIRFDTNAAVLIDNKKEPIGTRIFGPVPRELRAKNHMKIISLAPEVL</sequence>
<keyword id="KW-0687">Ribonucleoprotein</keyword>
<keyword id="KW-0689">Ribosomal protein</keyword>
<keyword id="KW-0694">RNA-binding</keyword>
<keyword id="KW-0699">rRNA-binding</keyword>
<comment type="function">
    <text evidence="1">Binds to 23S rRNA. Forms part of two intersubunit bridges in the 70S ribosome.</text>
</comment>
<comment type="subunit">
    <text evidence="1">Part of the 50S ribosomal subunit. Forms a cluster with proteins L3 and L19. In the 70S ribosome, L14 and L19 interact and together make contacts with the 16S rRNA in bridges B5 and B8.</text>
</comment>
<comment type="similarity">
    <text evidence="1">Belongs to the universal ribosomal protein uL14 family.</text>
</comment>
<proteinExistence type="inferred from homology"/>
<feature type="chain" id="PRO_1000055703" description="Large ribosomal subunit protein uL14">
    <location>
        <begin position="1"/>
        <end position="122"/>
    </location>
</feature>
<gene>
    <name evidence="1" type="primary">rplN</name>
    <name type="ordered locus">Smed_0996</name>
</gene>
<organism>
    <name type="scientific">Sinorhizobium medicae (strain WSM419)</name>
    <name type="common">Ensifer medicae</name>
    <dbReference type="NCBI Taxonomy" id="366394"/>
    <lineage>
        <taxon>Bacteria</taxon>
        <taxon>Pseudomonadati</taxon>
        <taxon>Pseudomonadota</taxon>
        <taxon>Alphaproteobacteria</taxon>
        <taxon>Hyphomicrobiales</taxon>
        <taxon>Rhizobiaceae</taxon>
        <taxon>Sinorhizobium/Ensifer group</taxon>
        <taxon>Sinorhizobium</taxon>
    </lineage>
</organism>
<evidence type="ECO:0000255" key="1">
    <source>
        <dbReference type="HAMAP-Rule" id="MF_01367"/>
    </source>
</evidence>
<evidence type="ECO:0000305" key="2"/>
<name>RL14_SINMW</name>
<accession>A6U869</accession>
<reference key="1">
    <citation type="submission" date="2007-06" db="EMBL/GenBank/DDBJ databases">
        <title>Complete sequence of Sinorhizobium medicae WSM419 chromosome.</title>
        <authorList>
            <consortium name="US DOE Joint Genome Institute"/>
            <person name="Copeland A."/>
            <person name="Lucas S."/>
            <person name="Lapidus A."/>
            <person name="Barry K."/>
            <person name="Glavina del Rio T."/>
            <person name="Dalin E."/>
            <person name="Tice H."/>
            <person name="Pitluck S."/>
            <person name="Chain P."/>
            <person name="Malfatti S."/>
            <person name="Shin M."/>
            <person name="Vergez L."/>
            <person name="Schmutz J."/>
            <person name="Larimer F."/>
            <person name="Land M."/>
            <person name="Hauser L."/>
            <person name="Kyrpides N."/>
            <person name="Mikhailova N."/>
            <person name="Reeve W.G."/>
            <person name="Richardson P."/>
        </authorList>
    </citation>
    <scope>NUCLEOTIDE SEQUENCE [LARGE SCALE GENOMIC DNA]</scope>
    <source>
        <strain>WSM419</strain>
    </source>
</reference>